<accession>A1AIM0</accession>
<organism>
    <name type="scientific">Escherichia coli O1:K1 / APEC</name>
    <dbReference type="NCBI Taxonomy" id="405955"/>
    <lineage>
        <taxon>Bacteria</taxon>
        <taxon>Pseudomonadati</taxon>
        <taxon>Pseudomonadota</taxon>
        <taxon>Gammaproteobacteria</taxon>
        <taxon>Enterobacterales</taxon>
        <taxon>Enterobacteriaceae</taxon>
        <taxon>Escherichia</taxon>
    </lineage>
</organism>
<sequence>MKALTARQQEVFDLIRDHISQTGMPPTRAEIAQRLGFRSPNAAEEHLKALARKGVIEIVSGASRGIRLLQEEEEGLPLVGRVAAGEPLLAQQHIEGHYQVDPSLFKPNADFLLRVSGMSMKDIGIMDGDLLAVHKTQDVRNGQVVVARIDDEVTVKRLKKQGNKVELLPENSEFKPIVVDLRQQSFTIEGLAVGVIRNGDWL</sequence>
<protein>
    <recommendedName>
        <fullName evidence="1">LexA repressor</fullName>
        <ecNumber evidence="1">3.4.21.88</ecNumber>
    </recommendedName>
</protein>
<reference key="1">
    <citation type="journal article" date="2007" name="J. Bacteriol.">
        <title>The genome sequence of avian pathogenic Escherichia coli strain O1:K1:H7 shares strong similarities with human extraintestinal pathogenic E. coli genomes.</title>
        <authorList>
            <person name="Johnson T.J."/>
            <person name="Kariyawasam S."/>
            <person name="Wannemuehler Y."/>
            <person name="Mangiamele P."/>
            <person name="Johnson S.J."/>
            <person name="Doetkott C."/>
            <person name="Skyberg J.A."/>
            <person name="Lynne A.M."/>
            <person name="Johnson J.R."/>
            <person name="Nolan L.K."/>
        </authorList>
    </citation>
    <scope>NUCLEOTIDE SEQUENCE [LARGE SCALE GENOMIC DNA]</scope>
</reference>
<proteinExistence type="inferred from homology"/>
<evidence type="ECO:0000255" key="1">
    <source>
        <dbReference type="HAMAP-Rule" id="MF_00015"/>
    </source>
</evidence>
<gene>
    <name evidence="1" type="primary">lexA</name>
    <name type="ordered locus">Ecok1_40160</name>
    <name type="ORF">APECO1_2426</name>
</gene>
<keyword id="KW-0068">Autocatalytic cleavage</keyword>
<keyword id="KW-0227">DNA damage</keyword>
<keyword id="KW-0234">DNA repair</keyword>
<keyword id="KW-0235">DNA replication</keyword>
<keyword id="KW-0238">DNA-binding</keyword>
<keyword id="KW-0378">Hydrolase</keyword>
<keyword id="KW-1185">Reference proteome</keyword>
<keyword id="KW-0678">Repressor</keyword>
<keyword id="KW-0742">SOS response</keyword>
<keyword id="KW-0804">Transcription</keyword>
<keyword id="KW-0805">Transcription regulation</keyword>
<comment type="function">
    <text evidence="1">Represses a number of genes involved in the response to DNA damage (SOS response), including recA and lexA. Binds to the 16 bp palindromic sequence 5'-CTGTATATATATACAG-3'. In the presence of single-stranded DNA, RecA interacts with LexA causing an autocatalytic cleavage which disrupts the DNA-binding part of LexA, leading to derepression of the SOS regulon and eventually DNA repair.</text>
</comment>
<comment type="catalytic activity">
    <reaction evidence="1">
        <text>Hydrolysis of Ala-|-Gly bond in repressor LexA.</text>
        <dbReference type="EC" id="3.4.21.88"/>
    </reaction>
</comment>
<comment type="subunit">
    <text evidence="1">Homodimer.</text>
</comment>
<comment type="similarity">
    <text evidence="1">Belongs to the peptidase S24 family.</text>
</comment>
<name>LEXA_ECOK1</name>
<feature type="chain" id="PRO_1000001281" description="LexA repressor">
    <location>
        <begin position="1"/>
        <end position="202"/>
    </location>
</feature>
<feature type="DNA-binding region" description="H-T-H motif" evidence="1">
    <location>
        <begin position="28"/>
        <end position="48"/>
    </location>
</feature>
<feature type="active site" description="For autocatalytic cleavage activity" evidence="1">
    <location>
        <position position="119"/>
    </location>
</feature>
<feature type="active site" description="For autocatalytic cleavage activity" evidence="1">
    <location>
        <position position="156"/>
    </location>
</feature>
<feature type="site" description="Cleavage; by autolysis" evidence="1">
    <location>
        <begin position="84"/>
        <end position="85"/>
    </location>
</feature>
<dbReference type="EC" id="3.4.21.88" evidence="1"/>
<dbReference type="EMBL" id="CP000468">
    <property type="protein sequence ID" value="ABJ03510.1"/>
    <property type="molecule type" value="Genomic_DNA"/>
</dbReference>
<dbReference type="RefSeq" id="WP_000646078.1">
    <property type="nucleotide sequence ID" value="NZ_CADILS010000008.1"/>
</dbReference>
<dbReference type="SMR" id="A1AIM0"/>
<dbReference type="MEROPS" id="S24.001"/>
<dbReference type="GeneID" id="93777788"/>
<dbReference type="KEGG" id="ecv:APECO1_2426"/>
<dbReference type="HOGENOM" id="CLU_066192_45_3_6"/>
<dbReference type="Proteomes" id="UP000008216">
    <property type="component" value="Chromosome"/>
</dbReference>
<dbReference type="GO" id="GO:0003677">
    <property type="term" value="F:DNA binding"/>
    <property type="evidence" value="ECO:0007669"/>
    <property type="project" value="UniProtKB-UniRule"/>
</dbReference>
<dbReference type="GO" id="GO:0004252">
    <property type="term" value="F:serine-type endopeptidase activity"/>
    <property type="evidence" value="ECO:0007669"/>
    <property type="project" value="UniProtKB-UniRule"/>
</dbReference>
<dbReference type="GO" id="GO:0006281">
    <property type="term" value="P:DNA repair"/>
    <property type="evidence" value="ECO:0007669"/>
    <property type="project" value="UniProtKB-UniRule"/>
</dbReference>
<dbReference type="GO" id="GO:0006260">
    <property type="term" value="P:DNA replication"/>
    <property type="evidence" value="ECO:0007669"/>
    <property type="project" value="UniProtKB-UniRule"/>
</dbReference>
<dbReference type="GO" id="GO:0045892">
    <property type="term" value="P:negative regulation of DNA-templated transcription"/>
    <property type="evidence" value="ECO:0007669"/>
    <property type="project" value="UniProtKB-UniRule"/>
</dbReference>
<dbReference type="GO" id="GO:0006508">
    <property type="term" value="P:proteolysis"/>
    <property type="evidence" value="ECO:0007669"/>
    <property type="project" value="InterPro"/>
</dbReference>
<dbReference type="GO" id="GO:0009432">
    <property type="term" value="P:SOS response"/>
    <property type="evidence" value="ECO:0007669"/>
    <property type="project" value="UniProtKB-UniRule"/>
</dbReference>
<dbReference type="CDD" id="cd06529">
    <property type="entry name" value="S24_LexA-like"/>
    <property type="match status" value="1"/>
</dbReference>
<dbReference type="FunFam" id="1.10.10.10:FF:000009">
    <property type="entry name" value="LexA repressor"/>
    <property type="match status" value="1"/>
</dbReference>
<dbReference type="FunFam" id="2.10.109.10:FF:000001">
    <property type="entry name" value="LexA repressor"/>
    <property type="match status" value="1"/>
</dbReference>
<dbReference type="Gene3D" id="2.10.109.10">
    <property type="entry name" value="Umud Fragment, subunit A"/>
    <property type="match status" value="1"/>
</dbReference>
<dbReference type="Gene3D" id="1.10.10.10">
    <property type="entry name" value="Winged helix-like DNA-binding domain superfamily/Winged helix DNA-binding domain"/>
    <property type="match status" value="1"/>
</dbReference>
<dbReference type="HAMAP" id="MF_00015">
    <property type="entry name" value="LexA"/>
    <property type="match status" value="1"/>
</dbReference>
<dbReference type="InterPro" id="IPR006200">
    <property type="entry name" value="LexA"/>
</dbReference>
<dbReference type="InterPro" id="IPR039418">
    <property type="entry name" value="LexA-like"/>
</dbReference>
<dbReference type="InterPro" id="IPR036286">
    <property type="entry name" value="LexA/Signal_pep-like_sf"/>
</dbReference>
<dbReference type="InterPro" id="IPR006199">
    <property type="entry name" value="LexA_DNA-bd_dom"/>
</dbReference>
<dbReference type="InterPro" id="IPR050077">
    <property type="entry name" value="LexA_repressor"/>
</dbReference>
<dbReference type="InterPro" id="IPR006197">
    <property type="entry name" value="Peptidase_S24_LexA"/>
</dbReference>
<dbReference type="InterPro" id="IPR015927">
    <property type="entry name" value="Peptidase_S24_S26A/B/C"/>
</dbReference>
<dbReference type="InterPro" id="IPR036388">
    <property type="entry name" value="WH-like_DNA-bd_sf"/>
</dbReference>
<dbReference type="InterPro" id="IPR036390">
    <property type="entry name" value="WH_DNA-bd_sf"/>
</dbReference>
<dbReference type="NCBIfam" id="TIGR00498">
    <property type="entry name" value="lexA"/>
    <property type="match status" value="1"/>
</dbReference>
<dbReference type="PANTHER" id="PTHR33516">
    <property type="entry name" value="LEXA REPRESSOR"/>
    <property type="match status" value="1"/>
</dbReference>
<dbReference type="PANTHER" id="PTHR33516:SF2">
    <property type="entry name" value="LEXA REPRESSOR-RELATED"/>
    <property type="match status" value="1"/>
</dbReference>
<dbReference type="Pfam" id="PF01726">
    <property type="entry name" value="LexA_DNA_bind"/>
    <property type="match status" value="1"/>
</dbReference>
<dbReference type="Pfam" id="PF00717">
    <property type="entry name" value="Peptidase_S24"/>
    <property type="match status" value="1"/>
</dbReference>
<dbReference type="PRINTS" id="PR00726">
    <property type="entry name" value="LEXASERPTASE"/>
</dbReference>
<dbReference type="SUPFAM" id="SSF51306">
    <property type="entry name" value="LexA/Signal peptidase"/>
    <property type="match status" value="1"/>
</dbReference>
<dbReference type="SUPFAM" id="SSF46785">
    <property type="entry name" value="Winged helix' DNA-binding domain"/>
    <property type="match status" value="1"/>
</dbReference>